<sequence length="157" mass="17969">MGFPKVERLLINYKTLDEFKKFKGCGAQELSMLEELQANIIENDSESPFYGIYYGGSLIARMSLYMKRNGGEPFEITGTYLELYKLEVLPNFQKQGFGEMLVNYAKGLQFPIKTIARIHSAGFWDKLNFQPVSVPDGDFYVWHPETNLNTVTNEESA</sequence>
<keyword id="KW-0012">Acyltransferase</keyword>
<keyword id="KW-0808">Transferase</keyword>
<dbReference type="EC" id="2.3.1.-" evidence="1"/>
<dbReference type="EMBL" id="CP000001">
    <property type="protein sequence ID" value="AAU16586.1"/>
    <property type="molecule type" value="Genomic_DNA"/>
</dbReference>
<dbReference type="RefSeq" id="WP_000506701.1">
    <property type="nucleotide sequence ID" value="NZ_CP009968.1"/>
</dbReference>
<dbReference type="SMR" id="Q636A5"/>
<dbReference type="KEGG" id="bcz:BCE33L3680"/>
<dbReference type="PATRIC" id="fig|288681.22.peg.1731"/>
<dbReference type="Proteomes" id="UP000002612">
    <property type="component" value="Chromosome"/>
</dbReference>
<dbReference type="GO" id="GO:0016747">
    <property type="term" value="F:acyltransferase activity, transferring groups other than amino-acyl groups"/>
    <property type="evidence" value="ECO:0007669"/>
    <property type="project" value="UniProtKB-UniRule"/>
</dbReference>
<dbReference type="CDD" id="cd04301">
    <property type="entry name" value="NAT_SF"/>
    <property type="match status" value="1"/>
</dbReference>
<dbReference type="Gene3D" id="3.40.630.30">
    <property type="match status" value="1"/>
</dbReference>
<dbReference type="HAMAP" id="MF_00824">
    <property type="entry name" value="Acetyltransf_YlbP"/>
    <property type="match status" value="1"/>
</dbReference>
<dbReference type="InterPro" id="IPR016181">
    <property type="entry name" value="Acyl_CoA_acyltransferase"/>
</dbReference>
<dbReference type="InterPro" id="IPR000182">
    <property type="entry name" value="GNAT_dom"/>
</dbReference>
<dbReference type="InterPro" id="IPR017274">
    <property type="entry name" value="YlbP"/>
</dbReference>
<dbReference type="NCBIfam" id="NF010241">
    <property type="entry name" value="PRK13688.1"/>
    <property type="match status" value="1"/>
</dbReference>
<dbReference type="Pfam" id="PF00583">
    <property type="entry name" value="Acetyltransf_1"/>
    <property type="match status" value="1"/>
</dbReference>
<dbReference type="PIRSF" id="PIRSF037732">
    <property type="entry name" value="YlbP_prd"/>
    <property type="match status" value="1"/>
</dbReference>
<dbReference type="SUPFAM" id="SSF55729">
    <property type="entry name" value="Acyl-CoA N-acyltransferases (Nat)"/>
    <property type="match status" value="1"/>
</dbReference>
<feature type="chain" id="PRO_0000232474" description="Uncharacterized N-acetyltransferase BCE33L3680">
    <location>
        <begin position="1"/>
        <end position="157"/>
    </location>
</feature>
<feature type="domain" description="N-acetyltransferase" evidence="1">
    <location>
        <begin position="9"/>
        <end position="146"/>
    </location>
</feature>
<gene>
    <name type="ordered locus">BCE33L3680</name>
</gene>
<accession>Q636A5</accession>
<protein>
    <recommendedName>
        <fullName evidence="1">Uncharacterized N-acetyltransferase BCE33L3680</fullName>
        <ecNumber evidence="1">2.3.1.-</ecNumber>
    </recommendedName>
</protein>
<reference key="1">
    <citation type="journal article" date="2006" name="J. Bacteriol.">
        <title>Pathogenomic sequence analysis of Bacillus cereus and Bacillus thuringiensis isolates closely related to Bacillus anthracis.</title>
        <authorList>
            <person name="Han C.S."/>
            <person name="Xie G."/>
            <person name="Challacombe J.F."/>
            <person name="Altherr M.R."/>
            <person name="Bhotika S.S."/>
            <person name="Bruce D."/>
            <person name="Campbell C.S."/>
            <person name="Campbell M.L."/>
            <person name="Chen J."/>
            <person name="Chertkov O."/>
            <person name="Cleland C."/>
            <person name="Dimitrijevic M."/>
            <person name="Doggett N.A."/>
            <person name="Fawcett J.J."/>
            <person name="Glavina T."/>
            <person name="Goodwin L.A."/>
            <person name="Hill K.K."/>
            <person name="Hitchcock P."/>
            <person name="Jackson P.J."/>
            <person name="Keim P."/>
            <person name="Kewalramani A.R."/>
            <person name="Longmire J."/>
            <person name="Lucas S."/>
            <person name="Malfatti S."/>
            <person name="McMurry K."/>
            <person name="Meincke L.J."/>
            <person name="Misra M."/>
            <person name="Moseman B.L."/>
            <person name="Mundt M."/>
            <person name="Munk A.C."/>
            <person name="Okinaka R.T."/>
            <person name="Parson-Quintana B."/>
            <person name="Reilly L.P."/>
            <person name="Richardson P."/>
            <person name="Robinson D.L."/>
            <person name="Rubin E."/>
            <person name="Saunders E."/>
            <person name="Tapia R."/>
            <person name="Tesmer J.G."/>
            <person name="Thayer N."/>
            <person name="Thompson L.S."/>
            <person name="Tice H."/>
            <person name="Ticknor L.O."/>
            <person name="Wills P.L."/>
            <person name="Brettin T.S."/>
            <person name="Gilna P."/>
        </authorList>
    </citation>
    <scope>NUCLEOTIDE SEQUENCE [LARGE SCALE GENOMIC DNA]</scope>
    <source>
        <strain>ZK / E33L</strain>
    </source>
</reference>
<proteinExistence type="inferred from homology"/>
<evidence type="ECO:0000255" key="1">
    <source>
        <dbReference type="HAMAP-Rule" id="MF_00824"/>
    </source>
</evidence>
<organism>
    <name type="scientific">Bacillus cereus (strain ZK / E33L)</name>
    <dbReference type="NCBI Taxonomy" id="288681"/>
    <lineage>
        <taxon>Bacteria</taxon>
        <taxon>Bacillati</taxon>
        <taxon>Bacillota</taxon>
        <taxon>Bacilli</taxon>
        <taxon>Bacillales</taxon>
        <taxon>Bacillaceae</taxon>
        <taxon>Bacillus</taxon>
        <taxon>Bacillus cereus group</taxon>
    </lineage>
</organism>
<name>Y3680_BACCZ</name>